<name>RL15E_METBU</name>
<dbReference type="EMBL" id="CP000300">
    <property type="protein sequence ID" value="ABE51202.1"/>
    <property type="molecule type" value="Genomic_DNA"/>
</dbReference>
<dbReference type="RefSeq" id="WP_011498364.1">
    <property type="nucleotide sequence ID" value="NC_007955.1"/>
</dbReference>
<dbReference type="SMR" id="Q12ZC4"/>
<dbReference type="STRING" id="259564.Mbur_0192"/>
<dbReference type="GeneID" id="3997159"/>
<dbReference type="KEGG" id="mbu:Mbur_0192"/>
<dbReference type="HOGENOM" id="CLU_080796_1_0_2"/>
<dbReference type="OrthoDB" id="8183at2157"/>
<dbReference type="Proteomes" id="UP000001979">
    <property type="component" value="Chromosome"/>
</dbReference>
<dbReference type="GO" id="GO:0022625">
    <property type="term" value="C:cytosolic large ribosomal subunit"/>
    <property type="evidence" value="ECO:0007669"/>
    <property type="project" value="TreeGrafter"/>
</dbReference>
<dbReference type="GO" id="GO:0003723">
    <property type="term" value="F:RNA binding"/>
    <property type="evidence" value="ECO:0007669"/>
    <property type="project" value="TreeGrafter"/>
</dbReference>
<dbReference type="GO" id="GO:0003735">
    <property type="term" value="F:structural constituent of ribosome"/>
    <property type="evidence" value="ECO:0007669"/>
    <property type="project" value="InterPro"/>
</dbReference>
<dbReference type="GO" id="GO:0002181">
    <property type="term" value="P:cytoplasmic translation"/>
    <property type="evidence" value="ECO:0007669"/>
    <property type="project" value="TreeGrafter"/>
</dbReference>
<dbReference type="FunFam" id="3.40.1120.10:FF:000002">
    <property type="entry name" value="50S ribosomal protein L15e"/>
    <property type="match status" value="1"/>
</dbReference>
<dbReference type="Gene3D" id="3.40.1120.10">
    <property type="entry name" value="Ribosomal protein l15e"/>
    <property type="match status" value="1"/>
</dbReference>
<dbReference type="HAMAP" id="MF_00256">
    <property type="entry name" value="Ribosomal_eL15"/>
    <property type="match status" value="1"/>
</dbReference>
<dbReference type="InterPro" id="IPR024794">
    <property type="entry name" value="Rbsml_eL15_core_dom_sf"/>
</dbReference>
<dbReference type="InterPro" id="IPR000439">
    <property type="entry name" value="Ribosomal_eL15"/>
</dbReference>
<dbReference type="InterPro" id="IPR020926">
    <property type="entry name" value="Ribosomal_eL15_arc"/>
</dbReference>
<dbReference type="InterPro" id="IPR012678">
    <property type="entry name" value="Ribosomal_uL23/eL15/eS24_sf"/>
</dbReference>
<dbReference type="NCBIfam" id="NF003269">
    <property type="entry name" value="PRK04243.1"/>
    <property type="match status" value="1"/>
</dbReference>
<dbReference type="PANTHER" id="PTHR11847:SF4">
    <property type="entry name" value="LARGE RIBOSOMAL SUBUNIT PROTEIN EL15"/>
    <property type="match status" value="1"/>
</dbReference>
<dbReference type="PANTHER" id="PTHR11847">
    <property type="entry name" value="RIBOSOMAL PROTEIN L15"/>
    <property type="match status" value="1"/>
</dbReference>
<dbReference type="Pfam" id="PF00827">
    <property type="entry name" value="Ribosomal_L15e"/>
    <property type="match status" value="1"/>
</dbReference>
<dbReference type="SMART" id="SM01384">
    <property type="entry name" value="Ribosomal_L15e"/>
    <property type="match status" value="1"/>
</dbReference>
<dbReference type="SUPFAM" id="SSF54189">
    <property type="entry name" value="Ribosomal proteins S24e, L23 and L15e"/>
    <property type="match status" value="1"/>
</dbReference>
<organism>
    <name type="scientific">Methanococcoides burtonii (strain DSM 6242 / NBRC 107633 / OCM 468 / ACE-M)</name>
    <dbReference type="NCBI Taxonomy" id="259564"/>
    <lineage>
        <taxon>Archaea</taxon>
        <taxon>Methanobacteriati</taxon>
        <taxon>Methanobacteriota</taxon>
        <taxon>Stenosarchaea group</taxon>
        <taxon>Methanomicrobia</taxon>
        <taxon>Methanosarcinales</taxon>
        <taxon>Methanosarcinaceae</taxon>
        <taxon>Methanococcoides</taxon>
    </lineage>
</organism>
<accession>Q12ZC4</accession>
<evidence type="ECO:0000255" key="1">
    <source>
        <dbReference type="HAMAP-Rule" id="MF_00256"/>
    </source>
</evidence>
<evidence type="ECO:0000256" key="2">
    <source>
        <dbReference type="SAM" id="MobiDB-lite"/>
    </source>
</evidence>
<evidence type="ECO:0000305" key="3"/>
<keyword id="KW-0687">Ribonucleoprotein</keyword>
<keyword id="KW-0689">Ribosomal protein</keyword>
<proteinExistence type="inferred from homology"/>
<reference key="1">
    <citation type="journal article" date="2009" name="ISME J.">
        <title>The genome sequence of the psychrophilic archaeon, Methanococcoides burtonii: the role of genome evolution in cold adaptation.</title>
        <authorList>
            <person name="Allen M.A."/>
            <person name="Lauro F.M."/>
            <person name="Williams T.J."/>
            <person name="Burg D."/>
            <person name="Siddiqui K.S."/>
            <person name="De Francisci D."/>
            <person name="Chong K.W."/>
            <person name="Pilak O."/>
            <person name="Chew H.H."/>
            <person name="De Maere M.Z."/>
            <person name="Ting L."/>
            <person name="Katrib M."/>
            <person name="Ng C."/>
            <person name="Sowers K.R."/>
            <person name="Galperin M.Y."/>
            <person name="Anderson I.J."/>
            <person name="Ivanova N."/>
            <person name="Dalin E."/>
            <person name="Martinez M."/>
            <person name="Lapidus A."/>
            <person name="Hauser L."/>
            <person name="Land M."/>
            <person name="Thomas T."/>
            <person name="Cavicchioli R."/>
        </authorList>
    </citation>
    <scope>NUCLEOTIDE SEQUENCE [LARGE SCALE GENOMIC DNA]</scope>
    <source>
        <strain>DSM 6242 / NBRC 107633 / OCM 468 / ACE-M</strain>
    </source>
</reference>
<protein>
    <recommendedName>
        <fullName evidence="1">Large ribosomal subunit protein eL15</fullName>
    </recommendedName>
    <alternativeName>
        <fullName evidence="3">50S ribosomal protein L15e</fullName>
    </alternativeName>
</protein>
<gene>
    <name evidence="1" type="primary">rpl15e</name>
    <name type="ordered locus">Mbur_0192</name>
</gene>
<feature type="chain" id="PRO_0000304204" description="Large ribosomal subunit protein eL15">
    <location>
        <begin position="1"/>
        <end position="197"/>
    </location>
</feature>
<feature type="region of interest" description="Disordered" evidence="2">
    <location>
        <begin position="163"/>
        <end position="197"/>
    </location>
</feature>
<feature type="compositionally biased region" description="Basic residues" evidence="2">
    <location>
        <begin position="163"/>
        <end position="172"/>
    </location>
</feature>
<feature type="compositionally biased region" description="Polar residues" evidence="2">
    <location>
        <begin position="186"/>
        <end position="197"/>
    </location>
</feature>
<sequence length="197" mass="22967">MSKSFYGYIRDAWKNPDETYVRDLRWERLQVWRKEGSVTRVERPTRIDRARSLGYKAKQGIVVARVKVRRGSMRKSRYIRGRRTQHTGKNKITVGKSIQRISEERAARKYPNMEVLNSYWVGEDGKQKWYEVILVDPSHPVIKSDKNLNWICGKAHSGRVFRGKTSAGRKGRGMQTRGTGTEKTRPSVRSNLNRSKK</sequence>
<comment type="similarity">
    <text evidence="1">Belongs to the eukaryotic ribosomal protein eL15 family.</text>
</comment>